<dbReference type="EMBL" id="AE017355">
    <property type="protein sequence ID" value="AAT62209.1"/>
    <property type="molecule type" value="Genomic_DNA"/>
</dbReference>
<dbReference type="RefSeq" id="WP_001180009.1">
    <property type="nucleotide sequence ID" value="NC_005957.1"/>
</dbReference>
<dbReference type="RefSeq" id="YP_035437.1">
    <property type="nucleotide sequence ID" value="NC_005957.1"/>
</dbReference>
<dbReference type="KEGG" id="btk:BT9727_1100"/>
<dbReference type="PATRIC" id="fig|281309.8.peg.1159"/>
<dbReference type="HOGENOM" id="CLU_142282_0_0_9"/>
<dbReference type="Proteomes" id="UP000001301">
    <property type="component" value="Chromosome"/>
</dbReference>
<dbReference type="HAMAP" id="MF_01861">
    <property type="entry name" value="UPF0738"/>
    <property type="match status" value="1"/>
</dbReference>
<dbReference type="InterPro" id="IPR020908">
    <property type="entry name" value="UPF0738"/>
</dbReference>
<dbReference type="Pfam" id="PF19785">
    <property type="entry name" value="UPF0738"/>
    <property type="match status" value="1"/>
</dbReference>
<name>Y1100_BACHK</name>
<reference key="1">
    <citation type="journal article" date="2006" name="J. Bacteriol.">
        <title>Pathogenomic sequence analysis of Bacillus cereus and Bacillus thuringiensis isolates closely related to Bacillus anthracis.</title>
        <authorList>
            <person name="Han C.S."/>
            <person name="Xie G."/>
            <person name="Challacombe J.F."/>
            <person name="Altherr M.R."/>
            <person name="Bhotika S.S."/>
            <person name="Bruce D."/>
            <person name="Campbell C.S."/>
            <person name="Campbell M.L."/>
            <person name="Chen J."/>
            <person name="Chertkov O."/>
            <person name="Cleland C."/>
            <person name="Dimitrijevic M."/>
            <person name="Doggett N.A."/>
            <person name="Fawcett J.J."/>
            <person name="Glavina T."/>
            <person name="Goodwin L.A."/>
            <person name="Hill K.K."/>
            <person name="Hitchcock P."/>
            <person name="Jackson P.J."/>
            <person name="Keim P."/>
            <person name="Kewalramani A.R."/>
            <person name="Longmire J."/>
            <person name="Lucas S."/>
            <person name="Malfatti S."/>
            <person name="McMurry K."/>
            <person name="Meincke L.J."/>
            <person name="Misra M."/>
            <person name="Moseman B.L."/>
            <person name="Mundt M."/>
            <person name="Munk A.C."/>
            <person name="Okinaka R.T."/>
            <person name="Parson-Quintana B."/>
            <person name="Reilly L.P."/>
            <person name="Richardson P."/>
            <person name="Robinson D.L."/>
            <person name="Rubin E."/>
            <person name="Saunders E."/>
            <person name="Tapia R."/>
            <person name="Tesmer J.G."/>
            <person name="Thayer N."/>
            <person name="Thompson L.S."/>
            <person name="Tice H."/>
            <person name="Ticknor L.O."/>
            <person name="Wills P.L."/>
            <person name="Brettin T.S."/>
            <person name="Gilna P."/>
        </authorList>
    </citation>
    <scope>NUCLEOTIDE SEQUENCE [LARGE SCALE GENOMIC DNA]</scope>
    <source>
        <strain>97-27</strain>
    </source>
</reference>
<proteinExistence type="inferred from homology"/>
<gene>
    <name type="ordered locus">BT9727_1100</name>
</gene>
<comment type="similarity">
    <text evidence="1">Belongs to the UPF0738 family.</text>
</comment>
<organism>
    <name type="scientific">Bacillus thuringiensis subsp. konkukian (strain 97-27)</name>
    <dbReference type="NCBI Taxonomy" id="281309"/>
    <lineage>
        <taxon>Bacteria</taxon>
        <taxon>Bacillati</taxon>
        <taxon>Bacillota</taxon>
        <taxon>Bacilli</taxon>
        <taxon>Bacillales</taxon>
        <taxon>Bacillaceae</taxon>
        <taxon>Bacillus</taxon>
        <taxon>Bacillus cereus group</taxon>
    </lineage>
</organism>
<feature type="chain" id="PRO_0000369652" description="UPF0738 protein BT9727_1100">
    <location>
        <begin position="1"/>
        <end position="123"/>
    </location>
</feature>
<protein>
    <recommendedName>
        <fullName evidence="1">UPF0738 protein BT9727_1100</fullName>
    </recommendedName>
</protein>
<sequence length="123" mass="14131">MQNKIQVKSVEKRENALIFCAENSEIEVKGLSARNHVLVDSDNLSFLYILENESSFIYVSIPHTCWEAMHEAMNNDVVMFVRVNDIEMELEGLKEEVEYLVENIEGNANYGEELVTAVEKVFL</sequence>
<evidence type="ECO:0000255" key="1">
    <source>
        <dbReference type="HAMAP-Rule" id="MF_01861"/>
    </source>
</evidence>
<accession>Q6HLY4</accession>